<proteinExistence type="inferred from homology"/>
<reference key="1">
    <citation type="journal article" date="2002" name="Nucleic Acids Res.">
        <title>Genome sequence of Oceanobacillus iheyensis isolated from the Iheya Ridge and its unexpected adaptive capabilities to extreme environments.</title>
        <authorList>
            <person name="Takami H."/>
            <person name="Takaki Y."/>
            <person name="Uchiyama I."/>
        </authorList>
    </citation>
    <scope>NUCLEOTIDE SEQUENCE [LARGE SCALE GENOMIC DNA]</scope>
    <source>
        <strain>DSM 14371 / CIP 107618 / JCM 11309 / KCTC 3954 / HTE831</strain>
    </source>
</reference>
<dbReference type="EMBL" id="BA000028">
    <property type="protein sequence ID" value="BAC13692.1"/>
    <property type="molecule type" value="Genomic_DNA"/>
</dbReference>
<dbReference type="RefSeq" id="WP_011066136.1">
    <property type="nucleotide sequence ID" value="NC_004193.1"/>
</dbReference>
<dbReference type="SMR" id="Q8EQG4"/>
<dbReference type="STRING" id="221109.gene:10733976"/>
<dbReference type="KEGG" id="oih:OB1736"/>
<dbReference type="eggNOG" id="COG4479">
    <property type="taxonomic scope" value="Bacteria"/>
</dbReference>
<dbReference type="HOGENOM" id="CLU_177534_1_0_9"/>
<dbReference type="OrthoDB" id="2242851at2"/>
<dbReference type="PhylomeDB" id="Q8EQG4"/>
<dbReference type="Proteomes" id="UP000000822">
    <property type="component" value="Chromosome"/>
</dbReference>
<dbReference type="Gene3D" id="1.10.150.260">
    <property type="entry name" value="YozE SAM-like"/>
    <property type="match status" value="1"/>
</dbReference>
<dbReference type="HAMAP" id="MF_01538">
    <property type="entry name" value="UPF0346"/>
    <property type="match status" value="1"/>
</dbReference>
<dbReference type="InterPro" id="IPR010673">
    <property type="entry name" value="UPF0346"/>
</dbReference>
<dbReference type="InterPro" id="IPR023089">
    <property type="entry name" value="YozE_SAM-like"/>
</dbReference>
<dbReference type="InterPro" id="IPR036806">
    <property type="entry name" value="YozE_SAM-like_sf"/>
</dbReference>
<dbReference type="NCBIfam" id="NF010193">
    <property type="entry name" value="PRK13672.1"/>
    <property type="match status" value="1"/>
</dbReference>
<dbReference type="Pfam" id="PF06855">
    <property type="entry name" value="YozE_SAM_like"/>
    <property type="match status" value="1"/>
</dbReference>
<dbReference type="PIRSF" id="PIRSF037262">
    <property type="entry name" value="UCP037262"/>
    <property type="match status" value="1"/>
</dbReference>
<dbReference type="SUPFAM" id="SSF140652">
    <property type="entry name" value="YozE-like"/>
    <property type="match status" value="1"/>
</dbReference>
<feature type="chain" id="PRO_0000164280" description="UPF0346 protein OB1736">
    <location>
        <begin position="1"/>
        <end position="75"/>
    </location>
</feature>
<comment type="similarity">
    <text evidence="1">Belongs to the UPF0346 family.</text>
</comment>
<protein>
    <recommendedName>
        <fullName evidence="1">UPF0346 protein OB1736</fullName>
    </recommendedName>
</protein>
<name>Y1736_OCEIH</name>
<organism>
    <name type="scientific">Oceanobacillus iheyensis (strain DSM 14371 / CIP 107618 / JCM 11309 / KCTC 3954 / HTE831)</name>
    <dbReference type="NCBI Taxonomy" id="221109"/>
    <lineage>
        <taxon>Bacteria</taxon>
        <taxon>Bacillati</taxon>
        <taxon>Bacillota</taxon>
        <taxon>Bacilli</taxon>
        <taxon>Bacillales</taxon>
        <taxon>Bacillaceae</taxon>
        <taxon>Oceanobacillus</taxon>
    </lineage>
</organism>
<accession>Q8EQG4</accession>
<keyword id="KW-1185">Reference proteome</keyword>
<evidence type="ECO:0000255" key="1">
    <source>
        <dbReference type="HAMAP-Rule" id="MF_01538"/>
    </source>
</evidence>
<gene>
    <name type="ordered locus">OB1736</name>
</gene>
<sequence length="75" mass="9173">MEQTFYQFLMTYRGKLEKDDNSELAEWAFRNHNFPKHSNTYDEISNYLEWNSPFPSATVTFDSLWNEYEWKKAAY</sequence>